<gene>
    <name evidence="1" type="primary">lgt</name>
    <name type="ordered locus">SSA_1546</name>
</gene>
<comment type="function">
    <text evidence="1">Catalyzes the transfer of the diacylglyceryl group from phosphatidylglycerol to the sulfhydryl group of the N-terminal cysteine of a prolipoprotein, the first step in the formation of mature lipoproteins.</text>
</comment>
<comment type="catalytic activity">
    <reaction evidence="1">
        <text>L-cysteinyl-[prolipoprotein] + a 1,2-diacyl-sn-glycero-3-phospho-(1'-sn-glycerol) = an S-1,2-diacyl-sn-glyceryl-L-cysteinyl-[prolipoprotein] + sn-glycerol 1-phosphate + H(+)</text>
        <dbReference type="Rhea" id="RHEA:56712"/>
        <dbReference type="Rhea" id="RHEA-COMP:14679"/>
        <dbReference type="Rhea" id="RHEA-COMP:14680"/>
        <dbReference type="ChEBI" id="CHEBI:15378"/>
        <dbReference type="ChEBI" id="CHEBI:29950"/>
        <dbReference type="ChEBI" id="CHEBI:57685"/>
        <dbReference type="ChEBI" id="CHEBI:64716"/>
        <dbReference type="ChEBI" id="CHEBI:140658"/>
        <dbReference type="EC" id="2.5.1.145"/>
    </reaction>
</comment>
<comment type="pathway">
    <text evidence="1">Protein modification; lipoprotein biosynthesis (diacylglyceryl transfer).</text>
</comment>
<comment type="subcellular location">
    <subcellularLocation>
        <location evidence="1">Cell membrane</location>
        <topology evidence="1">Multi-pass membrane protein</topology>
    </subcellularLocation>
</comment>
<comment type="similarity">
    <text evidence="1">Belongs to the Lgt family.</text>
</comment>
<proteinExistence type="inferred from homology"/>
<dbReference type="EC" id="2.5.1.145" evidence="1"/>
<dbReference type="EMBL" id="CP000387">
    <property type="protein sequence ID" value="ABN44937.1"/>
    <property type="molecule type" value="Genomic_DNA"/>
</dbReference>
<dbReference type="RefSeq" id="WP_002894973.1">
    <property type="nucleotide sequence ID" value="NC_009009.1"/>
</dbReference>
<dbReference type="RefSeq" id="YP_001035487.1">
    <property type="nucleotide sequence ID" value="NC_009009.1"/>
</dbReference>
<dbReference type="SMR" id="A3CP32"/>
<dbReference type="STRING" id="388919.SSA_1546"/>
<dbReference type="KEGG" id="ssa:SSA_1546"/>
<dbReference type="PATRIC" id="fig|388919.9.peg.1467"/>
<dbReference type="eggNOG" id="COG0682">
    <property type="taxonomic scope" value="Bacteria"/>
</dbReference>
<dbReference type="HOGENOM" id="CLU_013386_0_1_9"/>
<dbReference type="OrthoDB" id="871140at2"/>
<dbReference type="UniPathway" id="UPA00664"/>
<dbReference type="Proteomes" id="UP000002148">
    <property type="component" value="Chromosome"/>
</dbReference>
<dbReference type="GO" id="GO:0005886">
    <property type="term" value="C:plasma membrane"/>
    <property type="evidence" value="ECO:0007669"/>
    <property type="project" value="UniProtKB-SubCell"/>
</dbReference>
<dbReference type="GO" id="GO:0008961">
    <property type="term" value="F:phosphatidylglycerol-prolipoprotein diacylglyceryl transferase activity"/>
    <property type="evidence" value="ECO:0007669"/>
    <property type="project" value="UniProtKB-UniRule"/>
</dbReference>
<dbReference type="GO" id="GO:0042158">
    <property type="term" value="P:lipoprotein biosynthetic process"/>
    <property type="evidence" value="ECO:0007669"/>
    <property type="project" value="UniProtKB-UniRule"/>
</dbReference>
<dbReference type="HAMAP" id="MF_01147">
    <property type="entry name" value="Lgt"/>
    <property type="match status" value="1"/>
</dbReference>
<dbReference type="InterPro" id="IPR001640">
    <property type="entry name" value="Lgt"/>
</dbReference>
<dbReference type="NCBIfam" id="TIGR00544">
    <property type="entry name" value="lgt"/>
    <property type="match status" value="1"/>
</dbReference>
<dbReference type="PANTHER" id="PTHR30589:SF0">
    <property type="entry name" value="PHOSPHATIDYLGLYCEROL--PROLIPOPROTEIN DIACYLGLYCERYL TRANSFERASE"/>
    <property type="match status" value="1"/>
</dbReference>
<dbReference type="PANTHER" id="PTHR30589">
    <property type="entry name" value="PROLIPOPROTEIN DIACYLGLYCERYL TRANSFERASE"/>
    <property type="match status" value="1"/>
</dbReference>
<dbReference type="Pfam" id="PF01790">
    <property type="entry name" value="LGT"/>
    <property type="match status" value="1"/>
</dbReference>
<dbReference type="PROSITE" id="PS01311">
    <property type="entry name" value="LGT"/>
    <property type="match status" value="1"/>
</dbReference>
<feature type="chain" id="PRO_1000053516" description="Phosphatidylglycerol--prolipoprotein diacylglyceryl transferase">
    <location>
        <begin position="1"/>
        <end position="261"/>
    </location>
</feature>
<feature type="transmembrane region" description="Helical" evidence="1">
    <location>
        <begin position="12"/>
        <end position="32"/>
    </location>
</feature>
<feature type="transmembrane region" description="Helical" evidence="1">
    <location>
        <begin position="41"/>
        <end position="61"/>
    </location>
</feature>
<feature type="transmembrane region" description="Helical" evidence="1">
    <location>
        <begin position="87"/>
        <end position="107"/>
    </location>
</feature>
<feature type="transmembrane region" description="Helical" evidence="1">
    <location>
        <begin position="112"/>
        <end position="132"/>
    </location>
</feature>
<feature type="transmembrane region" description="Helical" evidence="1">
    <location>
        <begin position="170"/>
        <end position="190"/>
    </location>
</feature>
<feature type="transmembrane region" description="Helical" evidence="1">
    <location>
        <begin position="200"/>
        <end position="220"/>
    </location>
</feature>
<feature type="transmembrane region" description="Helical" evidence="1">
    <location>
        <begin position="229"/>
        <end position="249"/>
    </location>
</feature>
<feature type="binding site" evidence="1">
    <location>
        <position position="134"/>
    </location>
    <ligand>
        <name>a 1,2-diacyl-sn-glycero-3-phospho-(1'-sn-glycerol)</name>
        <dbReference type="ChEBI" id="CHEBI:64716"/>
    </ligand>
</feature>
<sequence length="261" mass="29870">MIDPVAIQLGPISIRWYAICIVTGLVLAVYLAMKEAPRRKIIPDDILDFILVAFPVAIVGARLYYVAFEWDYYGKNLIKIIDFWNGGIAGIAIYGGLIAGAIVLYFFCRRRLIHPVDFLDIAAPSVMIAQSIGRWGNFANHEAYGAAVKSLDYLPSFIRENMYIEGSYRQPTFLYESVWNLIGFILIIVLRRRPKLLRQGEIAAFYLIWYGFGRMIIEGMRTDSLMFAGLRVSQWLSLILIFVGIGIIIYQRKKKAPYYQE</sequence>
<keyword id="KW-1003">Cell membrane</keyword>
<keyword id="KW-0472">Membrane</keyword>
<keyword id="KW-1185">Reference proteome</keyword>
<keyword id="KW-0808">Transferase</keyword>
<keyword id="KW-0812">Transmembrane</keyword>
<keyword id="KW-1133">Transmembrane helix</keyword>
<reference key="1">
    <citation type="journal article" date="2007" name="J. Bacteriol.">
        <title>Genome of the opportunistic pathogen Streptococcus sanguinis.</title>
        <authorList>
            <person name="Xu P."/>
            <person name="Alves J.M."/>
            <person name="Kitten T."/>
            <person name="Brown A."/>
            <person name="Chen Z."/>
            <person name="Ozaki L.S."/>
            <person name="Manque P."/>
            <person name="Ge X."/>
            <person name="Serrano M.G."/>
            <person name="Puiu D."/>
            <person name="Hendricks S."/>
            <person name="Wang Y."/>
            <person name="Chaplin M.D."/>
            <person name="Akan D."/>
            <person name="Paik S."/>
            <person name="Peterson D.L."/>
            <person name="Macrina F.L."/>
            <person name="Buck G.A."/>
        </authorList>
    </citation>
    <scope>NUCLEOTIDE SEQUENCE [LARGE SCALE GENOMIC DNA]</scope>
    <source>
        <strain>SK36</strain>
    </source>
</reference>
<accession>A3CP32</accession>
<name>LGT_STRSV</name>
<protein>
    <recommendedName>
        <fullName evidence="1">Phosphatidylglycerol--prolipoprotein diacylglyceryl transferase</fullName>
        <ecNumber evidence="1">2.5.1.145</ecNumber>
    </recommendedName>
</protein>
<evidence type="ECO:0000255" key="1">
    <source>
        <dbReference type="HAMAP-Rule" id="MF_01147"/>
    </source>
</evidence>
<organism>
    <name type="scientific">Streptococcus sanguinis (strain SK36)</name>
    <dbReference type="NCBI Taxonomy" id="388919"/>
    <lineage>
        <taxon>Bacteria</taxon>
        <taxon>Bacillati</taxon>
        <taxon>Bacillota</taxon>
        <taxon>Bacilli</taxon>
        <taxon>Lactobacillales</taxon>
        <taxon>Streptococcaceae</taxon>
        <taxon>Streptococcus</taxon>
    </lineage>
</organism>